<name>FOLD1_PSEPK</name>
<dbReference type="EC" id="1.5.1.5" evidence="1"/>
<dbReference type="EC" id="3.5.4.9" evidence="1"/>
<dbReference type="EMBL" id="AE015451">
    <property type="protein sequence ID" value="AAN67561.1"/>
    <property type="molecule type" value="Genomic_DNA"/>
</dbReference>
<dbReference type="RefSeq" id="NP_744097.1">
    <property type="nucleotide sequence ID" value="NC_002947.4"/>
</dbReference>
<dbReference type="SMR" id="Q88LI7"/>
<dbReference type="STRING" id="160488.PP_1945"/>
<dbReference type="PaxDb" id="160488-PP_1945"/>
<dbReference type="KEGG" id="ppu:PP_1945"/>
<dbReference type="eggNOG" id="COG0190">
    <property type="taxonomic scope" value="Bacteria"/>
</dbReference>
<dbReference type="HOGENOM" id="CLU_034045_1_2_6"/>
<dbReference type="OrthoDB" id="9803580at2"/>
<dbReference type="PhylomeDB" id="Q88LI7"/>
<dbReference type="BioCyc" id="PPUT160488:G1G01-2067-MONOMER"/>
<dbReference type="UniPathway" id="UPA00193"/>
<dbReference type="Proteomes" id="UP000000556">
    <property type="component" value="Chromosome"/>
</dbReference>
<dbReference type="GO" id="GO:0005829">
    <property type="term" value="C:cytosol"/>
    <property type="evidence" value="ECO:0007669"/>
    <property type="project" value="TreeGrafter"/>
</dbReference>
<dbReference type="GO" id="GO:0004477">
    <property type="term" value="F:methenyltetrahydrofolate cyclohydrolase activity"/>
    <property type="evidence" value="ECO:0007669"/>
    <property type="project" value="UniProtKB-UniRule"/>
</dbReference>
<dbReference type="GO" id="GO:0004488">
    <property type="term" value="F:methylenetetrahydrofolate dehydrogenase (NADP+) activity"/>
    <property type="evidence" value="ECO:0007669"/>
    <property type="project" value="UniProtKB-UniRule"/>
</dbReference>
<dbReference type="GO" id="GO:0000105">
    <property type="term" value="P:L-histidine biosynthetic process"/>
    <property type="evidence" value="ECO:0007669"/>
    <property type="project" value="UniProtKB-KW"/>
</dbReference>
<dbReference type="GO" id="GO:0009086">
    <property type="term" value="P:methionine biosynthetic process"/>
    <property type="evidence" value="ECO:0007669"/>
    <property type="project" value="UniProtKB-KW"/>
</dbReference>
<dbReference type="GO" id="GO:0006164">
    <property type="term" value="P:purine nucleotide biosynthetic process"/>
    <property type="evidence" value="ECO:0007669"/>
    <property type="project" value="UniProtKB-KW"/>
</dbReference>
<dbReference type="GO" id="GO:0035999">
    <property type="term" value="P:tetrahydrofolate interconversion"/>
    <property type="evidence" value="ECO:0007669"/>
    <property type="project" value="UniProtKB-UniRule"/>
</dbReference>
<dbReference type="CDD" id="cd01080">
    <property type="entry name" value="NAD_bind_m-THF_DH_Cyclohyd"/>
    <property type="match status" value="1"/>
</dbReference>
<dbReference type="FunFam" id="3.40.50.720:FF:000006">
    <property type="entry name" value="Bifunctional protein FolD"/>
    <property type="match status" value="1"/>
</dbReference>
<dbReference type="FunFam" id="3.40.50.10860:FF:000005">
    <property type="entry name" value="C-1-tetrahydrofolate synthase, cytoplasmic, putative"/>
    <property type="match status" value="1"/>
</dbReference>
<dbReference type="Gene3D" id="3.40.50.10860">
    <property type="entry name" value="Leucine Dehydrogenase, chain A, domain 1"/>
    <property type="match status" value="1"/>
</dbReference>
<dbReference type="Gene3D" id="3.40.50.720">
    <property type="entry name" value="NAD(P)-binding Rossmann-like Domain"/>
    <property type="match status" value="1"/>
</dbReference>
<dbReference type="HAMAP" id="MF_01576">
    <property type="entry name" value="THF_DHG_CYH"/>
    <property type="match status" value="1"/>
</dbReference>
<dbReference type="InterPro" id="IPR046346">
    <property type="entry name" value="Aminoacid_DH-like_N_sf"/>
</dbReference>
<dbReference type="InterPro" id="IPR036291">
    <property type="entry name" value="NAD(P)-bd_dom_sf"/>
</dbReference>
<dbReference type="InterPro" id="IPR000672">
    <property type="entry name" value="THF_DH/CycHdrlase"/>
</dbReference>
<dbReference type="InterPro" id="IPR020630">
    <property type="entry name" value="THF_DH/CycHdrlase_cat_dom"/>
</dbReference>
<dbReference type="InterPro" id="IPR020867">
    <property type="entry name" value="THF_DH/CycHdrlase_CS"/>
</dbReference>
<dbReference type="InterPro" id="IPR020631">
    <property type="entry name" value="THF_DH/CycHdrlase_NAD-bd_dom"/>
</dbReference>
<dbReference type="NCBIfam" id="NF008058">
    <property type="entry name" value="PRK10792.1"/>
    <property type="match status" value="1"/>
</dbReference>
<dbReference type="NCBIfam" id="NF010785">
    <property type="entry name" value="PRK14188.1"/>
    <property type="match status" value="1"/>
</dbReference>
<dbReference type="PANTHER" id="PTHR48099:SF5">
    <property type="entry name" value="C-1-TETRAHYDROFOLATE SYNTHASE, CYTOPLASMIC"/>
    <property type="match status" value="1"/>
</dbReference>
<dbReference type="PANTHER" id="PTHR48099">
    <property type="entry name" value="C-1-TETRAHYDROFOLATE SYNTHASE, CYTOPLASMIC-RELATED"/>
    <property type="match status" value="1"/>
</dbReference>
<dbReference type="Pfam" id="PF00763">
    <property type="entry name" value="THF_DHG_CYH"/>
    <property type="match status" value="1"/>
</dbReference>
<dbReference type="Pfam" id="PF02882">
    <property type="entry name" value="THF_DHG_CYH_C"/>
    <property type="match status" value="1"/>
</dbReference>
<dbReference type="PRINTS" id="PR00085">
    <property type="entry name" value="THFDHDRGNASE"/>
</dbReference>
<dbReference type="SUPFAM" id="SSF53223">
    <property type="entry name" value="Aminoacid dehydrogenase-like, N-terminal domain"/>
    <property type="match status" value="1"/>
</dbReference>
<dbReference type="SUPFAM" id="SSF51735">
    <property type="entry name" value="NAD(P)-binding Rossmann-fold domains"/>
    <property type="match status" value="1"/>
</dbReference>
<dbReference type="PROSITE" id="PS00767">
    <property type="entry name" value="THF_DHG_CYH_2"/>
    <property type="match status" value="1"/>
</dbReference>
<organism>
    <name type="scientific">Pseudomonas putida (strain ATCC 47054 / DSM 6125 / CFBP 8728 / NCIMB 11950 / KT2440)</name>
    <dbReference type="NCBI Taxonomy" id="160488"/>
    <lineage>
        <taxon>Bacteria</taxon>
        <taxon>Pseudomonadati</taxon>
        <taxon>Pseudomonadota</taxon>
        <taxon>Gammaproteobacteria</taxon>
        <taxon>Pseudomonadales</taxon>
        <taxon>Pseudomonadaceae</taxon>
        <taxon>Pseudomonas</taxon>
    </lineage>
</organism>
<sequence>MTAQLIDGKALAAQVRQEVEEGVAAFIADGWAAPGLAVVLVGCDAASQVYVENKIRQTEAVGMRSERFLLPADTDESQLLTLIEQLNNNDAIHGILVQFPLPPQIDVSRVISAIHPSKDVDGFNPLNVGRLAAGLEGGLTPCTPLGVMRLIRSVHPDIAGMGALVVGASNVVGRPLARLLLQADCTVSIAHIRTTDLARRCREADILVVATGVPGLIRGDYIKPGATVIDVGISRVRLPNGRDKLTGDVAFEEAVEVAGAITPVPGGVGPMTIAYLLANTLQAARAAVRLR</sequence>
<evidence type="ECO:0000255" key="1">
    <source>
        <dbReference type="HAMAP-Rule" id="MF_01576"/>
    </source>
</evidence>
<protein>
    <recommendedName>
        <fullName evidence="1">Bifunctional protein FolD 1</fullName>
    </recommendedName>
    <domain>
        <recommendedName>
            <fullName evidence="1">Methylenetetrahydrofolate dehydrogenase</fullName>
            <ecNumber evidence="1">1.5.1.5</ecNumber>
        </recommendedName>
    </domain>
    <domain>
        <recommendedName>
            <fullName evidence="1">Methenyltetrahydrofolate cyclohydrolase</fullName>
            <ecNumber evidence="1">3.5.4.9</ecNumber>
        </recommendedName>
    </domain>
</protein>
<reference key="1">
    <citation type="journal article" date="2002" name="Environ. Microbiol.">
        <title>Complete genome sequence and comparative analysis of the metabolically versatile Pseudomonas putida KT2440.</title>
        <authorList>
            <person name="Nelson K.E."/>
            <person name="Weinel C."/>
            <person name="Paulsen I.T."/>
            <person name="Dodson R.J."/>
            <person name="Hilbert H."/>
            <person name="Martins dos Santos V.A.P."/>
            <person name="Fouts D.E."/>
            <person name="Gill S.R."/>
            <person name="Pop M."/>
            <person name="Holmes M."/>
            <person name="Brinkac L.M."/>
            <person name="Beanan M.J."/>
            <person name="DeBoy R.T."/>
            <person name="Daugherty S.C."/>
            <person name="Kolonay J.F."/>
            <person name="Madupu R."/>
            <person name="Nelson W.C."/>
            <person name="White O."/>
            <person name="Peterson J.D."/>
            <person name="Khouri H.M."/>
            <person name="Hance I."/>
            <person name="Chris Lee P."/>
            <person name="Holtzapple E.K."/>
            <person name="Scanlan D."/>
            <person name="Tran K."/>
            <person name="Moazzez A."/>
            <person name="Utterback T.R."/>
            <person name="Rizzo M."/>
            <person name="Lee K."/>
            <person name="Kosack D."/>
            <person name="Moestl D."/>
            <person name="Wedler H."/>
            <person name="Lauber J."/>
            <person name="Stjepandic D."/>
            <person name="Hoheisel J."/>
            <person name="Straetz M."/>
            <person name="Heim S."/>
            <person name="Kiewitz C."/>
            <person name="Eisen J.A."/>
            <person name="Timmis K.N."/>
            <person name="Duesterhoeft A."/>
            <person name="Tuemmler B."/>
            <person name="Fraser C.M."/>
        </authorList>
    </citation>
    <scope>NUCLEOTIDE SEQUENCE [LARGE SCALE GENOMIC DNA]</scope>
    <source>
        <strain>ATCC 47054 / DSM 6125 / CFBP 8728 / NCIMB 11950 / KT2440</strain>
    </source>
</reference>
<accession>Q88LI7</accession>
<proteinExistence type="inferred from homology"/>
<gene>
    <name evidence="1" type="primary">folD1</name>
    <name type="synonym">folD-1</name>
    <name type="ordered locus">PP_1945</name>
</gene>
<comment type="function">
    <text evidence="1">Catalyzes the oxidation of 5,10-methylenetetrahydrofolate to 5,10-methenyltetrahydrofolate and then the hydrolysis of 5,10-methenyltetrahydrofolate to 10-formyltetrahydrofolate.</text>
</comment>
<comment type="catalytic activity">
    <reaction evidence="1">
        <text>(6R)-5,10-methylene-5,6,7,8-tetrahydrofolate + NADP(+) = (6R)-5,10-methenyltetrahydrofolate + NADPH</text>
        <dbReference type="Rhea" id="RHEA:22812"/>
        <dbReference type="ChEBI" id="CHEBI:15636"/>
        <dbReference type="ChEBI" id="CHEBI:57455"/>
        <dbReference type="ChEBI" id="CHEBI:57783"/>
        <dbReference type="ChEBI" id="CHEBI:58349"/>
        <dbReference type="EC" id="1.5.1.5"/>
    </reaction>
</comment>
<comment type="catalytic activity">
    <reaction evidence="1">
        <text>(6R)-5,10-methenyltetrahydrofolate + H2O = (6R)-10-formyltetrahydrofolate + H(+)</text>
        <dbReference type="Rhea" id="RHEA:23700"/>
        <dbReference type="ChEBI" id="CHEBI:15377"/>
        <dbReference type="ChEBI" id="CHEBI:15378"/>
        <dbReference type="ChEBI" id="CHEBI:57455"/>
        <dbReference type="ChEBI" id="CHEBI:195366"/>
        <dbReference type="EC" id="3.5.4.9"/>
    </reaction>
</comment>
<comment type="pathway">
    <text evidence="1">One-carbon metabolism; tetrahydrofolate interconversion.</text>
</comment>
<comment type="subunit">
    <text evidence="1">Homodimer.</text>
</comment>
<comment type="similarity">
    <text evidence="1">Belongs to the tetrahydrofolate dehydrogenase/cyclohydrolase family.</text>
</comment>
<keyword id="KW-0028">Amino-acid biosynthesis</keyword>
<keyword id="KW-0368">Histidine biosynthesis</keyword>
<keyword id="KW-0378">Hydrolase</keyword>
<keyword id="KW-0486">Methionine biosynthesis</keyword>
<keyword id="KW-0511">Multifunctional enzyme</keyword>
<keyword id="KW-0521">NADP</keyword>
<keyword id="KW-0554">One-carbon metabolism</keyword>
<keyword id="KW-0560">Oxidoreductase</keyword>
<keyword id="KW-0658">Purine biosynthesis</keyword>
<keyword id="KW-1185">Reference proteome</keyword>
<feature type="chain" id="PRO_0000268446" description="Bifunctional protein FolD 1">
    <location>
        <begin position="1"/>
        <end position="291"/>
    </location>
</feature>
<feature type="binding site" evidence="1">
    <location>
        <begin position="167"/>
        <end position="169"/>
    </location>
    <ligand>
        <name>NADP(+)</name>
        <dbReference type="ChEBI" id="CHEBI:58349"/>
    </ligand>
</feature>
<feature type="binding site" evidence="1">
    <location>
        <position position="192"/>
    </location>
    <ligand>
        <name>NADP(+)</name>
        <dbReference type="ChEBI" id="CHEBI:58349"/>
    </ligand>
</feature>
<feature type="binding site" evidence="1">
    <location>
        <position position="233"/>
    </location>
    <ligand>
        <name>NADP(+)</name>
        <dbReference type="ChEBI" id="CHEBI:58349"/>
    </ligand>
</feature>